<reference key="1">
    <citation type="journal article" date="2005" name="Science">
        <title>The transcriptional landscape of the mammalian genome.</title>
        <authorList>
            <person name="Carninci P."/>
            <person name="Kasukawa T."/>
            <person name="Katayama S."/>
            <person name="Gough J."/>
            <person name="Frith M.C."/>
            <person name="Maeda N."/>
            <person name="Oyama R."/>
            <person name="Ravasi T."/>
            <person name="Lenhard B."/>
            <person name="Wells C."/>
            <person name="Kodzius R."/>
            <person name="Shimokawa K."/>
            <person name="Bajic V.B."/>
            <person name="Brenner S.E."/>
            <person name="Batalov S."/>
            <person name="Forrest A.R."/>
            <person name="Zavolan M."/>
            <person name="Davis M.J."/>
            <person name="Wilming L.G."/>
            <person name="Aidinis V."/>
            <person name="Allen J.E."/>
            <person name="Ambesi-Impiombato A."/>
            <person name="Apweiler R."/>
            <person name="Aturaliya R.N."/>
            <person name="Bailey T.L."/>
            <person name="Bansal M."/>
            <person name="Baxter L."/>
            <person name="Beisel K.W."/>
            <person name="Bersano T."/>
            <person name="Bono H."/>
            <person name="Chalk A.M."/>
            <person name="Chiu K.P."/>
            <person name="Choudhary V."/>
            <person name="Christoffels A."/>
            <person name="Clutterbuck D.R."/>
            <person name="Crowe M.L."/>
            <person name="Dalla E."/>
            <person name="Dalrymple B.P."/>
            <person name="de Bono B."/>
            <person name="Della Gatta G."/>
            <person name="di Bernardo D."/>
            <person name="Down T."/>
            <person name="Engstrom P."/>
            <person name="Fagiolini M."/>
            <person name="Faulkner G."/>
            <person name="Fletcher C.F."/>
            <person name="Fukushima T."/>
            <person name="Furuno M."/>
            <person name="Futaki S."/>
            <person name="Gariboldi M."/>
            <person name="Georgii-Hemming P."/>
            <person name="Gingeras T.R."/>
            <person name="Gojobori T."/>
            <person name="Green R.E."/>
            <person name="Gustincich S."/>
            <person name="Harbers M."/>
            <person name="Hayashi Y."/>
            <person name="Hensch T.K."/>
            <person name="Hirokawa N."/>
            <person name="Hill D."/>
            <person name="Huminiecki L."/>
            <person name="Iacono M."/>
            <person name="Ikeo K."/>
            <person name="Iwama A."/>
            <person name="Ishikawa T."/>
            <person name="Jakt M."/>
            <person name="Kanapin A."/>
            <person name="Katoh M."/>
            <person name="Kawasawa Y."/>
            <person name="Kelso J."/>
            <person name="Kitamura H."/>
            <person name="Kitano H."/>
            <person name="Kollias G."/>
            <person name="Krishnan S.P."/>
            <person name="Kruger A."/>
            <person name="Kummerfeld S.K."/>
            <person name="Kurochkin I.V."/>
            <person name="Lareau L.F."/>
            <person name="Lazarevic D."/>
            <person name="Lipovich L."/>
            <person name="Liu J."/>
            <person name="Liuni S."/>
            <person name="McWilliam S."/>
            <person name="Madan Babu M."/>
            <person name="Madera M."/>
            <person name="Marchionni L."/>
            <person name="Matsuda H."/>
            <person name="Matsuzawa S."/>
            <person name="Miki H."/>
            <person name="Mignone F."/>
            <person name="Miyake S."/>
            <person name="Morris K."/>
            <person name="Mottagui-Tabar S."/>
            <person name="Mulder N."/>
            <person name="Nakano N."/>
            <person name="Nakauchi H."/>
            <person name="Ng P."/>
            <person name="Nilsson R."/>
            <person name="Nishiguchi S."/>
            <person name="Nishikawa S."/>
            <person name="Nori F."/>
            <person name="Ohara O."/>
            <person name="Okazaki Y."/>
            <person name="Orlando V."/>
            <person name="Pang K.C."/>
            <person name="Pavan W.J."/>
            <person name="Pavesi G."/>
            <person name="Pesole G."/>
            <person name="Petrovsky N."/>
            <person name="Piazza S."/>
            <person name="Reed J."/>
            <person name="Reid J.F."/>
            <person name="Ring B.Z."/>
            <person name="Ringwald M."/>
            <person name="Rost B."/>
            <person name="Ruan Y."/>
            <person name="Salzberg S.L."/>
            <person name="Sandelin A."/>
            <person name="Schneider C."/>
            <person name="Schoenbach C."/>
            <person name="Sekiguchi K."/>
            <person name="Semple C.A."/>
            <person name="Seno S."/>
            <person name="Sessa L."/>
            <person name="Sheng Y."/>
            <person name="Shibata Y."/>
            <person name="Shimada H."/>
            <person name="Shimada K."/>
            <person name="Silva D."/>
            <person name="Sinclair B."/>
            <person name="Sperling S."/>
            <person name="Stupka E."/>
            <person name="Sugiura K."/>
            <person name="Sultana R."/>
            <person name="Takenaka Y."/>
            <person name="Taki K."/>
            <person name="Tammoja K."/>
            <person name="Tan S.L."/>
            <person name="Tang S."/>
            <person name="Taylor M.S."/>
            <person name="Tegner J."/>
            <person name="Teichmann S.A."/>
            <person name="Ueda H.R."/>
            <person name="van Nimwegen E."/>
            <person name="Verardo R."/>
            <person name="Wei C.L."/>
            <person name="Yagi K."/>
            <person name="Yamanishi H."/>
            <person name="Zabarovsky E."/>
            <person name="Zhu S."/>
            <person name="Zimmer A."/>
            <person name="Hide W."/>
            <person name="Bult C."/>
            <person name="Grimmond S.M."/>
            <person name="Teasdale R.D."/>
            <person name="Liu E.T."/>
            <person name="Brusic V."/>
            <person name="Quackenbush J."/>
            <person name="Wahlestedt C."/>
            <person name="Mattick J.S."/>
            <person name="Hume D.A."/>
            <person name="Kai C."/>
            <person name="Sasaki D."/>
            <person name="Tomaru Y."/>
            <person name="Fukuda S."/>
            <person name="Kanamori-Katayama M."/>
            <person name="Suzuki M."/>
            <person name="Aoki J."/>
            <person name="Arakawa T."/>
            <person name="Iida J."/>
            <person name="Imamura K."/>
            <person name="Itoh M."/>
            <person name="Kato T."/>
            <person name="Kawaji H."/>
            <person name="Kawagashira N."/>
            <person name="Kawashima T."/>
            <person name="Kojima M."/>
            <person name="Kondo S."/>
            <person name="Konno H."/>
            <person name="Nakano K."/>
            <person name="Ninomiya N."/>
            <person name="Nishio T."/>
            <person name="Okada M."/>
            <person name="Plessy C."/>
            <person name="Shibata K."/>
            <person name="Shiraki T."/>
            <person name="Suzuki S."/>
            <person name="Tagami M."/>
            <person name="Waki K."/>
            <person name="Watahiki A."/>
            <person name="Okamura-Oho Y."/>
            <person name="Suzuki H."/>
            <person name="Kawai J."/>
            <person name="Hayashizaki Y."/>
        </authorList>
    </citation>
    <scope>NUCLEOTIDE SEQUENCE [LARGE SCALE MRNA]</scope>
    <source>
        <strain>C57BL/6J</strain>
    </source>
</reference>
<reference key="2">
    <citation type="journal article" date="2004" name="Genome Res.">
        <title>The status, quality, and expansion of the NIH full-length cDNA project: the Mammalian Gene Collection (MGC).</title>
        <authorList>
            <consortium name="The MGC Project Team"/>
        </authorList>
    </citation>
    <scope>NUCLEOTIDE SEQUENCE [LARGE SCALE MRNA]</scope>
    <source>
        <tissue>Brain</tissue>
        <tissue>Testis</tissue>
    </source>
</reference>
<reference key="3">
    <citation type="journal article" date="2010" name="Cell">
        <title>A tissue-specific atlas of mouse protein phosphorylation and expression.</title>
        <authorList>
            <person name="Huttlin E.L."/>
            <person name="Jedrychowski M.P."/>
            <person name="Elias J.E."/>
            <person name="Goswami T."/>
            <person name="Rad R."/>
            <person name="Beausoleil S.A."/>
            <person name="Villen J."/>
            <person name="Haas W."/>
            <person name="Sowa M.E."/>
            <person name="Gygi S.P."/>
        </authorList>
    </citation>
    <scope>IDENTIFICATION BY MASS SPECTROMETRY [LARGE SCALE ANALYSIS]</scope>
    <source>
        <tissue>Brain</tissue>
    </source>
</reference>
<dbReference type="EMBL" id="AK147458">
    <property type="protein sequence ID" value="BAE27925.1"/>
    <property type="molecule type" value="mRNA"/>
</dbReference>
<dbReference type="EMBL" id="BC139026">
    <property type="protein sequence ID" value="AAI39027.1"/>
    <property type="molecule type" value="mRNA"/>
</dbReference>
<dbReference type="EMBL" id="BC139027">
    <property type="protein sequence ID" value="AAI39028.1"/>
    <property type="molecule type" value="mRNA"/>
</dbReference>
<dbReference type="CCDS" id="CCDS26477.1"/>
<dbReference type="RefSeq" id="NP_001028571.1">
    <property type="nucleotide sequence ID" value="NM_001033399.4"/>
</dbReference>
<dbReference type="SMR" id="Q3UHD2"/>
<dbReference type="BioGRID" id="236559">
    <property type="interactions" value="1"/>
</dbReference>
<dbReference type="FunCoup" id="Q3UHD2">
    <property type="interactions" value="32"/>
</dbReference>
<dbReference type="STRING" id="10090.ENSMUSP00000062662"/>
<dbReference type="iPTMnet" id="Q3UHD2"/>
<dbReference type="PhosphoSitePlus" id="Q3UHD2"/>
<dbReference type="SwissPalm" id="Q3UHD2"/>
<dbReference type="PaxDb" id="10090-ENSMUSP00000062662"/>
<dbReference type="PeptideAtlas" id="Q3UHD2"/>
<dbReference type="ProteomicsDB" id="267429"/>
<dbReference type="Antibodypedia" id="24958">
    <property type="antibodies" value="35 antibodies from 13 providers"/>
</dbReference>
<dbReference type="Ensembl" id="ENSMUST00000055341.7">
    <property type="protein sequence ID" value="ENSMUSP00000062662.6"/>
    <property type="gene ID" value="ENSMUSG00000051335.7"/>
</dbReference>
<dbReference type="GeneID" id="328232"/>
<dbReference type="KEGG" id="mmu:328232"/>
<dbReference type="UCSC" id="uc007qfx.1">
    <property type="organism name" value="mouse"/>
</dbReference>
<dbReference type="AGR" id="MGI:2145304"/>
<dbReference type="CTD" id="54438"/>
<dbReference type="MGI" id="MGI:2145304">
    <property type="gene designation" value="Gfod1"/>
</dbReference>
<dbReference type="VEuPathDB" id="HostDB:ENSMUSG00000051335"/>
<dbReference type="eggNOG" id="KOG2742">
    <property type="taxonomic scope" value="Eukaryota"/>
</dbReference>
<dbReference type="GeneTree" id="ENSGT00940000160837"/>
<dbReference type="HOGENOM" id="CLU_023194_8_0_1"/>
<dbReference type="InParanoid" id="Q3UHD2"/>
<dbReference type="OMA" id="NQKDYVH"/>
<dbReference type="OrthoDB" id="446809at2759"/>
<dbReference type="PhylomeDB" id="Q3UHD2"/>
<dbReference type="TreeFam" id="TF323246"/>
<dbReference type="Reactome" id="R-MMU-9013406">
    <property type="pathway name" value="RHOQ GTPase cycle"/>
</dbReference>
<dbReference type="BioGRID-ORCS" id="328232">
    <property type="hits" value="2 hits in 77 CRISPR screens"/>
</dbReference>
<dbReference type="ChiTaRS" id="Gfod1">
    <property type="organism name" value="mouse"/>
</dbReference>
<dbReference type="PRO" id="PR:Q3UHD2"/>
<dbReference type="Proteomes" id="UP000000589">
    <property type="component" value="Chromosome 13"/>
</dbReference>
<dbReference type="RNAct" id="Q3UHD2">
    <property type="molecule type" value="protein"/>
</dbReference>
<dbReference type="Bgee" id="ENSMUSG00000051335">
    <property type="expression patterns" value="Expressed in cerebellar vermis and 189 other cell types or tissues"/>
</dbReference>
<dbReference type="ExpressionAtlas" id="Q3UHD2">
    <property type="expression patterns" value="baseline and differential"/>
</dbReference>
<dbReference type="GO" id="GO:0005576">
    <property type="term" value="C:extracellular region"/>
    <property type="evidence" value="ECO:0007669"/>
    <property type="project" value="UniProtKB-SubCell"/>
</dbReference>
<dbReference type="GO" id="GO:0042802">
    <property type="term" value="F:identical protein binding"/>
    <property type="evidence" value="ECO:0000250"/>
    <property type="project" value="UniProtKB"/>
</dbReference>
<dbReference type="GO" id="GO:0000166">
    <property type="term" value="F:nucleotide binding"/>
    <property type="evidence" value="ECO:0007669"/>
    <property type="project" value="InterPro"/>
</dbReference>
<dbReference type="GO" id="GO:0016491">
    <property type="term" value="F:oxidoreductase activity"/>
    <property type="evidence" value="ECO:0007669"/>
    <property type="project" value="UniProtKB-KW"/>
</dbReference>
<dbReference type="Gene3D" id="3.30.360.10">
    <property type="entry name" value="Dihydrodipicolinate Reductase, domain 2"/>
    <property type="match status" value="1"/>
</dbReference>
<dbReference type="Gene3D" id="3.40.50.720">
    <property type="entry name" value="NAD(P)-binding Rossmann-like Domain"/>
    <property type="match status" value="1"/>
</dbReference>
<dbReference type="InterPro" id="IPR000683">
    <property type="entry name" value="Gfo/Idh/MocA-like_OxRdtase_N"/>
</dbReference>
<dbReference type="InterPro" id="IPR050463">
    <property type="entry name" value="Gfo/Idh/MocA_oxidrdct_glycsds"/>
</dbReference>
<dbReference type="InterPro" id="IPR055170">
    <property type="entry name" value="GFO_IDH_MocA-like_dom"/>
</dbReference>
<dbReference type="InterPro" id="IPR036291">
    <property type="entry name" value="NAD(P)-bd_dom_sf"/>
</dbReference>
<dbReference type="PANTHER" id="PTHR43818">
    <property type="entry name" value="BCDNA.GH03377"/>
    <property type="match status" value="1"/>
</dbReference>
<dbReference type="PANTHER" id="PTHR43818:SF2">
    <property type="entry name" value="GLUCOSE-FRUCTOSE OXIDOREDUCTASE DOMAIN-CONTAINING PROTEIN 1"/>
    <property type="match status" value="1"/>
</dbReference>
<dbReference type="Pfam" id="PF01408">
    <property type="entry name" value="GFO_IDH_MocA"/>
    <property type="match status" value="1"/>
</dbReference>
<dbReference type="Pfam" id="PF22725">
    <property type="entry name" value="GFO_IDH_MocA_C3"/>
    <property type="match status" value="1"/>
</dbReference>
<dbReference type="SUPFAM" id="SSF55347">
    <property type="entry name" value="Glyceraldehyde-3-phosphate dehydrogenase-like, C-terminal domain"/>
    <property type="match status" value="1"/>
</dbReference>
<dbReference type="SUPFAM" id="SSF51735">
    <property type="entry name" value="NAD(P)-binding Rossmann-fold domains"/>
    <property type="match status" value="1"/>
</dbReference>
<keyword id="KW-1185">Reference proteome</keyword>
<keyword id="KW-0964">Secreted</keyword>
<keyword id="KW-0732">Signal</keyword>
<name>GFOD1_MOUSE</name>
<accession>Q3UHD2</accession>
<accession>B9EI39</accession>
<protein>
    <recommendedName>
        <fullName>Glucose-fructose oxidoreductase domain-containing protein 1</fullName>
    </recommendedName>
</protein>
<comment type="function">
    <text evidence="1">Probably catalytically inactive enzyme. Does not bind NAD or NADP.</text>
</comment>
<comment type="subunit">
    <text evidence="1">Homodimer. Interacts with NKIRAS2.</text>
</comment>
<comment type="subcellular location">
    <subcellularLocation>
        <location evidence="3">Secreted</location>
    </subcellularLocation>
</comment>
<comment type="similarity">
    <text evidence="3">Belongs to the Gfo/Idh/MocA family.</text>
</comment>
<organism>
    <name type="scientific">Mus musculus</name>
    <name type="common">Mouse</name>
    <dbReference type="NCBI Taxonomy" id="10090"/>
    <lineage>
        <taxon>Eukaryota</taxon>
        <taxon>Metazoa</taxon>
        <taxon>Chordata</taxon>
        <taxon>Craniata</taxon>
        <taxon>Vertebrata</taxon>
        <taxon>Euteleostomi</taxon>
        <taxon>Mammalia</taxon>
        <taxon>Eutheria</taxon>
        <taxon>Euarchontoglires</taxon>
        <taxon>Glires</taxon>
        <taxon>Rodentia</taxon>
        <taxon>Myomorpha</taxon>
        <taxon>Muroidea</taxon>
        <taxon>Muridae</taxon>
        <taxon>Murinae</taxon>
        <taxon>Mus</taxon>
        <taxon>Mus</taxon>
    </lineage>
</organism>
<sequence>MLPGVGVFGTSLTARVIIPLLKDEGFAVKALWGRTQEEAEELAKEMSVPFYTSRIDEVLLHQDVDLVCINLPPPLTRQIAVKTLGIGKNVICDRTATPLDAFRMMSAAHYYPKLMSIMGNVLRFLPAFVRMKQLIEEGYVGELLVCEVQVHSGSLLGKKYNWSCDDLMGGGGLHSVGTYIIDLLTFLTGQKAVKVHGLLKTFVKQTDHIKGIRQITSDDFCTFQMVLEGGVCCTVTLNFNVPGEFKQDVTVVGSAGRLLAVGTDLYGQRNSAPEQELLLQDTTSVSNSLLPEKAFSDIPSPYLRGTMKMMQAVRQAFQDQDDRRTWDGRPLTMAATFDDCLYALCVVDTIKRSSQTGEWQNIAIMTEEPELSPAYLISEAMRRSRMSLYC</sequence>
<evidence type="ECO:0000250" key="1">
    <source>
        <dbReference type="UniProtKB" id="Q9NXC2"/>
    </source>
</evidence>
<evidence type="ECO:0000255" key="2"/>
<evidence type="ECO:0000305" key="3"/>
<gene>
    <name type="primary">Gfod1</name>
</gene>
<proteinExistence type="evidence at protein level"/>
<feature type="signal peptide" evidence="2">
    <location>
        <begin position="1"/>
        <end position="21"/>
    </location>
</feature>
<feature type="chain" id="PRO_0000282969" description="Glucose-fructose oxidoreductase domain-containing protein 1">
    <location>
        <begin position="22"/>
        <end position="390"/>
    </location>
</feature>